<comment type="function">
    <text evidence="1 2">Cleaves peptides in various proteins in a process that requires ATP hydrolysis. Has a chymotrypsin-like activity. Plays a major role in the degradation of misfolded proteins (By similarity). Probably partially responsible for degradation of ECF sigma factor SigR prime.</text>
</comment>
<comment type="catalytic activity">
    <reaction evidence="1">
        <text>Hydrolysis of proteins to small peptides in the presence of ATP and magnesium. alpha-casein is the usual test substrate. In the absence of ATP, only oligopeptides shorter than five residues are hydrolyzed (such as succinyl-Leu-Tyr-|-NHMec, and Leu-Tyr-Leu-|-Tyr-Trp, in which cleavage of the -Tyr-|-Leu- and -Tyr-|-Trp bonds also occurs).</text>
        <dbReference type="EC" id="3.4.21.92"/>
    </reaction>
</comment>
<comment type="subunit">
    <text evidence="1">Fourteen ClpP subunits assemble into 2 heptameric rings which stack back to back to give a disk-like structure with a central cavity, resembling the structure of eukaryotic proteasomes.</text>
</comment>
<comment type="subcellular location">
    <subcellularLocation>
        <location evidence="1">Cytoplasm</location>
    </subcellularLocation>
</comment>
<comment type="induction">
    <text evidence="2">Expressed from 2 promoters, 1 of which (clpP2) is positively regulated by the thio-oxidizing agent diamide, probably via SigR. Probably a clpP1-clpP2 operon.</text>
</comment>
<comment type="disruption phenotype">
    <text evidence="2">A double clpP1-clpP2 deletion increases the stability of ECF sigma factor SigR prime from 10 to 23 minutes.</text>
</comment>
<comment type="similarity">
    <text evidence="1">Belongs to the peptidase S14 family.</text>
</comment>
<comment type="sequence caution" evidence="3">
    <conflict type="erroneous initiation">
        <sequence resource="EMBL-CDS" id="AAC70948"/>
    </conflict>
    <text>Extended N-terminus.</text>
</comment>
<comment type="sequence caution" evidence="3">
    <conflict type="erroneous initiation">
        <sequence resource="EMBL-CDS" id="CAC09994"/>
    </conflict>
    <text>Extended N-terminus.</text>
</comment>
<gene>
    <name evidence="1" type="primary">clpP2</name>
    <name type="ordered locus">SCO2618</name>
    <name type="ORF">SCC80.03c</name>
</gene>
<proteinExistence type="evidence at transcript level"/>
<accession>Q9ZH58</accession>
<protein>
    <recommendedName>
        <fullName evidence="1">ATP-dependent Clp protease proteolytic subunit 2</fullName>
        <ecNumber evidence="1">3.4.21.92</ecNumber>
    </recommendedName>
    <alternativeName>
        <fullName evidence="1">Endopeptidase Clp 2</fullName>
    </alternativeName>
</protein>
<sequence length="218" mass="24180">MRAASQGRYTGPQAESRYVIPRFVERTSQGVREYDPYAKLFEERVIFLGVQIDDASANDVMAQLLCLESMDPDRDISVYINSPGGSFTALTAIYDTMQYVKPDVQTVCMGQAASAAAVLLAAGTPGKRMALPNARVLIHQPYSETGRGQVSDLEIAANEILRMRSQLEEMLAKHSTTPVEKIREDIERDKILTAEDALSYGLIDQIITTRKMDNSSLR</sequence>
<keyword id="KW-0963">Cytoplasm</keyword>
<keyword id="KW-0378">Hydrolase</keyword>
<keyword id="KW-0645">Protease</keyword>
<keyword id="KW-1185">Reference proteome</keyword>
<keyword id="KW-0720">Serine protease</keyword>
<reference key="1">
    <citation type="journal article" date="1999" name="Mol. Microbiol.">
        <title>Alteration of the synthesis of the Clp ATP-dependent protease affects morphological and physiological differentiation in Streptomyces.</title>
        <authorList>
            <person name="de Crecy-Lagard V."/>
            <person name="Servant-Moisson P."/>
            <person name="Viala J."/>
            <person name="Grandvalet C."/>
            <person name="Mazodier P."/>
        </authorList>
    </citation>
    <scope>NUCLEOTIDE SEQUENCE [GENOMIC DNA]</scope>
    <source>
        <strain>ATCC BAA-471 / A3(2) / M145</strain>
    </source>
</reference>
<reference key="2">
    <citation type="journal article" date="2002" name="Nature">
        <title>Complete genome sequence of the model actinomycete Streptomyces coelicolor A3(2).</title>
        <authorList>
            <person name="Bentley S.D."/>
            <person name="Chater K.F."/>
            <person name="Cerdeno-Tarraga A.-M."/>
            <person name="Challis G.L."/>
            <person name="Thomson N.R."/>
            <person name="James K.D."/>
            <person name="Harris D.E."/>
            <person name="Quail M.A."/>
            <person name="Kieser H."/>
            <person name="Harper D."/>
            <person name="Bateman A."/>
            <person name="Brown S."/>
            <person name="Chandra G."/>
            <person name="Chen C.W."/>
            <person name="Collins M."/>
            <person name="Cronin A."/>
            <person name="Fraser A."/>
            <person name="Goble A."/>
            <person name="Hidalgo J."/>
            <person name="Hornsby T."/>
            <person name="Howarth S."/>
            <person name="Huang C.-H."/>
            <person name="Kieser T."/>
            <person name="Larke L."/>
            <person name="Murphy L.D."/>
            <person name="Oliver K."/>
            <person name="O'Neil S."/>
            <person name="Rabbinowitsch E."/>
            <person name="Rajandream M.A."/>
            <person name="Rutherford K.M."/>
            <person name="Rutter S."/>
            <person name="Seeger K."/>
            <person name="Saunders D."/>
            <person name="Sharp S."/>
            <person name="Squares R."/>
            <person name="Squares S."/>
            <person name="Taylor K."/>
            <person name="Warren T."/>
            <person name="Wietzorrek A."/>
            <person name="Woodward J.R."/>
            <person name="Barrell B.G."/>
            <person name="Parkhill J."/>
            <person name="Hopwood D.A."/>
        </authorList>
    </citation>
    <scope>NUCLEOTIDE SEQUENCE [LARGE SCALE GENOMIC DNA]</scope>
    <source>
        <strain>ATCC BAA-471 / A3(2) / M145</strain>
    </source>
</reference>
<reference key="3">
    <citation type="journal article" date="2009" name="Mol. Microbiol.">
        <title>Positive and negative feedback regulatory loops of thiol-oxidative stress response mediated by an unstable isoform of sigmaR in actinomycetes.</title>
        <authorList>
            <person name="Kim M.S."/>
            <person name="Hahn M.Y."/>
            <person name="Cho Y."/>
            <person name="Cho S.N."/>
            <person name="Roe J.H."/>
        </authorList>
    </citation>
    <scope>FUNCTION</scope>
    <scope>INDUCTION</scope>
    <scope>DISRUPTION PHENOTYPE</scope>
    <source>
        <strain>ATCC BAA-471 / A3(2) / M145</strain>
    </source>
</reference>
<feature type="chain" id="PRO_0000179665" description="ATP-dependent Clp protease proteolytic subunit 2">
    <location>
        <begin position="1"/>
        <end position="218"/>
    </location>
</feature>
<feature type="active site" description="Nucleophile" evidence="1">
    <location>
        <position position="114"/>
    </location>
</feature>
<feature type="active site" evidence="1">
    <location>
        <position position="139"/>
    </location>
</feature>
<dbReference type="EC" id="3.4.21.92" evidence="1"/>
<dbReference type="EMBL" id="AF071885">
    <property type="protein sequence ID" value="AAC70948.1"/>
    <property type="status" value="ALT_INIT"/>
    <property type="molecule type" value="Genomic_DNA"/>
</dbReference>
<dbReference type="EMBL" id="AL939113">
    <property type="protein sequence ID" value="CAC09994.1"/>
    <property type="status" value="ALT_INIT"/>
    <property type="molecule type" value="Genomic_DNA"/>
</dbReference>
<dbReference type="RefSeq" id="NP_626854.1">
    <property type="nucleotide sequence ID" value="NC_003888.3"/>
</dbReference>
<dbReference type="SMR" id="Q9ZH58"/>
<dbReference type="FunCoup" id="Q9ZH58">
    <property type="interactions" value="194"/>
</dbReference>
<dbReference type="STRING" id="100226.gene:17760222"/>
<dbReference type="MEROPS" id="S14.009"/>
<dbReference type="PaxDb" id="100226-SCO2618"/>
<dbReference type="KEGG" id="sco:SCO2618"/>
<dbReference type="PATRIC" id="fig|100226.15.peg.2664"/>
<dbReference type="eggNOG" id="COG0740">
    <property type="taxonomic scope" value="Bacteria"/>
</dbReference>
<dbReference type="HOGENOM" id="CLU_058707_3_2_11"/>
<dbReference type="InParanoid" id="Q9ZH58"/>
<dbReference type="OrthoDB" id="9802800at2"/>
<dbReference type="PhylomeDB" id="Q9ZH58"/>
<dbReference type="Proteomes" id="UP000001973">
    <property type="component" value="Chromosome"/>
</dbReference>
<dbReference type="GO" id="GO:0005737">
    <property type="term" value="C:cytoplasm"/>
    <property type="evidence" value="ECO:0007669"/>
    <property type="project" value="UniProtKB-SubCell"/>
</dbReference>
<dbReference type="GO" id="GO:0009368">
    <property type="term" value="C:endopeptidase Clp complex"/>
    <property type="evidence" value="ECO:0000318"/>
    <property type="project" value="GO_Central"/>
</dbReference>
<dbReference type="GO" id="GO:0004176">
    <property type="term" value="F:ATP-dependent peptidase activity"/>
    <property type="evidence" value="ECO:0000318"/>
    <property type="project" value="GO_Central"/>
</dbReference>
<dbReference type="GO" id="GO:0051117">
    <property type="term" value="F:ATPase binding"/>
    <property type="evidence" value="ECO:0000318"/>
    <property type="project" value="GO_Central"/>
</dbReference>
<dbReference type="GO" id="GO:0004252">
    <property type="term" value="F:serine-type endopeptidase activity"/>
    <property type="evidence" value="ECO:0000318"/>
    <property type="project" value="GO_Central"/>
</dbReference>
<dbReference type="GO" id="GO:0006515">
    <property type="term" value="P:protein quality control for misfolded or incompletely synthesized proteins"/>
    <property type="evidence" value="ECO:0000318"/>
    <property type="project" value="GO_Central"/>
</dbReference>
<dbReference type="CDD" id="cd07017">
    <property type="entry name" value="S14_ClpP_2"/>
    <property type="match status" value="1"/>
</dbReference>
<dbReference type="FunFam" id="3.90.226.10:FF:000002">
    <property type="entry name" value="ATP-dependent Clp protease proteolytic subunit"/>
    <property type="match status" value="1"/>
</dbReference>
<dbReference type="Gene3D" id="3.90.226.10">
    <property type="entry name" value="2-enoyl-CoA Hydratase, Chain A, domain 1"/>
    <property type="match status" value="1"/>
</dbReference>
<dbReference type="HAMAP" id="MF_00444">
    <property type="entry name" value="ClpP"/>
    <property type="match status" value="1"/>
</dbReference>
<dbReference type="InterPro" id="IPR001907">
    <property type="entry name" value="ClpP"/>
</dbReference>
<dbReference type="InterPro" id="IPR029045">
    <property type="entry name" value="ClpP/crotonase-like_dom_sf"/>
</dbReference>
<dbReference type="InterPro" id="IPR023562">
    <property type="entry name" value="ClpP/TepA"/>
</dbReference>
<dbReference type="InterPro" id="IPR033135">
    <property type="entry name" value="ClpP_His_AS"/>
</dbReference>
<dbReference type="InterPro" id="IPR018215">
    <property type="entry name" value="ClpP_Ser_AS"/>
</dbReference>
<dbReference type="NCBIfam" id="NF001368">
    <property type="entry name" value="PRK00277.1"/>
    <property type="match status" value="1"/>
</dbReference>
<dbReference type="NCBIfam" id="NF009205">
    <property type="entry name" value="PRK12553.1"/>
    <property type="match status" value="1"/>
</dbReference>
<dbReference type="PANTHER" id="PTHR10381">
    <property type="entry name" value="ATP-DEPENDENT CLP PROTEASE PROTEOLYTIC SUBUNIT"/>
    <property type="match status" value="1"/>
</dbReference>
<dbReference type="PANTHER" id="PTHR10381:SF26">
    <property type="entry name" value="ATP-DEPENDENT CLP PROTEASE PROTEOLYTIC SUBUNIT-LIKE-RELATED"/>
    <property type="match status" value="1"/>
</dbReference>
<dbReference type="Pfam" id="PF00574">
    <property type="entry name" value="CLP_protease"/>
    <property type="match status" value="1"/>
</dbReference>
<dbReference type="PRINTS" id="PR00127">
    <property type="entry name" value="CLPPROTEASEP"/>
</dbReference>
<dbReference type="SUPFAM" id="SSF52096">
    <property type="entry name" value="ClpP/crotonase"/>
    <property type="match status" value="1"/>
</dbReference>
<dbReference type="PROSITE" id="PS00382">
    <property type="entry name" value="CLP_PROTEASE_HIS"/>
    <property type="match status" value="1"/>
</dbReference>
<dbReference type="PROSITE" id="PS00381">
    <property type="entry name" value="CLP_PROTEASE_SER"/>
    <property type="match status" value="1"/>
</dbReference>
<name>CLPP2_STRCO</name>
<organism>
    <name type="scientific">Streptomyces coelicolor (strain ATCC BAA-471 / A3(2) / M145)</name>
    <dbReference type="NCBI Taxonomy" id="100226"/>
    <lineage>
        <taxon>Bacteria</taxon>
        <taxon>Bacillati</taxon>
        <taxon>Actinomycetota</taxon>
        <taxon>Actinomycetes</taxon>
        <taxon>Kitasatosporales</taxon>
        <taxon>Streptomycetaceae</taxon>
        <taxon>Streptomyces</taxon>
        <taxon>Streptomyces albidoflavus group</taxon>
    </lineage>
</organism>
<evidence type="ECO:0000255" key="1">
    <source>
        <dbReference type="HAMAP-Rule" id="MF_00444"/>
    </source>
</evidence>
<evidence type="ECO:0000269" key="2">
    <source>
    </source>
</evidence>
<evidence type="ECO:0000305" key="3"/>